<comment type="function">
    <text evidence="1 8 9 10 12 13 14 15 16 17">Ceramide synthase that catalyzes the transfer of the acyl chain from acyl-CoA to a sphingoid base, with high selectivity toward very-long-chain fatty acyl-CoA (chain length C22-C27) (PubMed:17977534, PubMed:18165233, PubMed:18541923, PubMed:19728861, PubMed:20937905, PubMed:22144673, PubMed:22661289, PubMed:26887952, PubMed:29632068). N-acylates sphinganine and sphingosine bases to form dihydroceramides and ceramides in de novo synthesis and salvage pathways, respectively (By similarity) (PubMed:17977534, PubMed:18165233, PubMed:18541923, PubMed:19728861, PubMed:20937905, PubMed:22144673, PubMed:22661289, PubMed:26887952, PubMed:29632068). Plays a non-redundant role in the synthesis of ceramides with very-long-chain fatty acids in kidney, liver and brain. Regulates the abundance of myelin-specific sphingolipids galactosylceramide and sulfatide that affects myelin sheath architecture and motor neuron functions (By similarity).</text>
</comment>
<comment type="catalytic activity">
    <reaction evidence="6 8 9 10 12 13 16 17">
        <text>a very long-chain fatty acyl-CoA + a sphingoid base = an N-(very-long-chain fatty acyl)-sphingoid base + CoA + H(+)</text>
        <dbReference type="Rhea" id="RHEA:61480"/>
        <dbReference type="ChEBI" id="CHEBI:15378"/>
        <dbReference type="ChEBI" id="CHEBI:57287"/>
        <dbReference type="ChEBI" id="CHEBI:84410"/>
        <dbReference type="ChEBI" id="CHEBI:138261"/>
        <dbReference type="ChEBI" id="CHEBI:144712"/>
        <dbReference type="EC" id="2.3.1.297"/>
    </reaction>
    <physiologicalReaction direction="left-to-right" evidence="6 8 9 10 12 13 16 17">
        <dbReference type="Rhea" id="RHEA:61481"/>
    </physiologicalReaction>
</comment>
<comment type="catalytic activity">
    <reaction evidence="9 14 17">
        <text>docosanoyl-CoA + sphinganine = N-docosanoylsphinganine + CoA + H(+)</text>
        <dbReference type="Rhea" id="RHEA:36535"/>
        <dbReference type="ChEBI" id="CHEBI:15378"/>
        <dbReference type="ChEBI" id="CHEBI:57287"/>
        <dbReference type="ChEBI" id="CHEBI:57817"/>
        <dbReference type="ChEBI" id="CHEBI:65059"/>
        <dbReference type="ChEBI" id="CHEBI:67021"/>
    </reaction>
    <physiologicalReaction direction="left-to-right" evidence="9 14 17">
        <dbReference type="Rhea" id="RHEA:36536"/>
    </physiologicalReaction>
</comment>
<comment type="catalytic activity">
    <reaction evidence="6 8 9 10 17">
        <text>tetracosanoyl-CoA + sphinganine = N-tetracosanoylsphinganine + CoA + H(+)</text>
        <dbReference type="Rhea" id="RHEA:33591"/>
        <dbReference type="ChEBI" id="CHEBI:15378"/>
        <dbReference type="ChEBI" id="CHEBI:52961"/>
        <dbReference type="ChEBI" id="CHEBI:57287"/>
        <dbReference type="ChEBI" id="CHEBI:57817"/>
        <dbReference type="ChEBI" id="CHEBI:65052"/>
    </reaction>
    <physiologicalReaction direction="left-to-right" evidence="6 8 9 10 17">
        <dbReference type="Rhea" id="RHEA:33592"/>
    </physiologicalReaction>
</comment>
<comment type="catalytic activity">
    <reaction evidence="6 9">
        <text>hexacosanoyl-CoA + sphinganine = N-hexacosanoylsphinganine + CoA + H(+)</text>
        <dbReference type="Rhea" id="RHEA:33351"/>
        <dbReference type="ChEBI" id="CHEBI:15378"/>
        <dbReference type="ChEBI" id="CHEBI:52962"/>
        <dbReference type="ChEBI" id="CHEBI:57287"/>
        <dbReference type="ChEBI" id="CHEBI:57817"/>
        <dbReference type="ChEBI" id="CHEBI:64868"/>
    </reaction>
    <physiologicalReaction direction="left-to-right" evidence="6 9">
        <dbReference type="Rhea" id="RHEA:33352"/>
    </physiologicalReaction>
</comment>
<comment type="catalytic activity">
    <reaction evidence="9 15 16">
        <text>(15Z)-tetracosenoyl-CoA + sphinganine = N-(15Z-tetracosenoyl)-sphinganine + CoA + H(+)</text>
        <dbReference type="Rhea" id="RHEA:36667"/>
        <dbReference type="ChEBI" id="CHEBI:15378"/>
        <dbReference type="ChEBI" id="CHEBI:57287"/>
        <dbReference type="ChEBI" id="CHEBI:57817"/>
        <dbReference type="ChEBI" id="CHEBI:74128"/>
        <dbReference type="ChEBI" id="CHEBI:74130"/>
    </reaction>
    <physiologicalReaction direction="left-to-right" evidence="9 15 16">
        <dbReference type="Rhea" id="RHEA:36668"/>
    </physiologicalReaction>
</comment>
<comment type="catalytic activity">
    <reaction evidence="10">
        <text>2-hydroxytetracosanoyl-CoA + sphinganine = N-(2-hydroxytetracosanoyl)-sphinganine + CoA + H(+)</text>
        <dbReference type="Rhea" id="RHEA:36627"/>
        <dbReference type="ChEBI" id="CHEBI:15378"/>
        <dbReference type="ChEBI" id="CHEBI:52371"/>
        <dbReference type="ChEBI" id="CHEBI:57287"/>
        <dbReference type="ChEBI" id="CHEBI:57817"/>
        <dbReference type="ChEBI" id="CHEBI:74118"/>
    </reaction>
    <physiologicalReaction direction="left-to-right" evidence="10">
        <dbReference type="Rhea" id="RHEA:36628"/>
    </physiologicalReaction>
</comment>
<comment type="catalytic activity">
    <reaction evidence="10">
        <text>2-hydroxydocosanoyl-CoA + sphinganine = N-(2-hydroxydocosanoyl)-sphinganine + CoA + H(+)</text>
        <dbReference type="Rhea" id="RHEA:36619"/>
        <dbReference type="ChEBI" id="CHEBI:15378"/>
        <dbReference type="ChEBI" id="CHEBI:57287"/>
        <dbReference type="ChEBI" id="CHEBI:57817"/>
        <dbReference type="ChEBI" id="CHEBI:67023"/>
        <dbReference type="ChEBI" id="CHEBI:74117"/>
    </reaction>
    <physiologicalReaction direction="left-to-right" evidence="10">
        <dbReference type="Rhea" id="RHEA:36620"/>
    </physiologicalReaction>
</comment>
<comment type="catalytic activity">
    <reaction evidence="10">
        <text>2-hydroxytetracosenoyl-CoA + sphinganine = N-(2-hydroxytetracosenoyl)-sphinganine + CoA + H(+)</text>
        <dbReference type="Rhea" id="RHEA:36767"/>
        <dbReference type="ChEBI" id="CHEBI:15378"/>
        <dbReference type="ChEBI" id="CHEBI:57287"/>
        <dbReference type="ChEBI" id="CHEBI:57817"/>
        <dbReference type="ChEBI" id="CHEBI:74215"/>
        <dbReference type="ChEBI" id="CHEBI:74216"/>
    </reaction>
    <physiologicalReaction direction="left-to-right" evidence="10">
        <dbReference type="Rhea" id="RHEA:36768"/>
    </physiologicalReaction>
</comment>
<comment type="catalytic activity">
    <reaction evidence="10">
        <text>tetracosenoyl-CoA + sphinganine = an N-tetracosenoylsphinganine + CoA + H(+)</text>
        <dbReference type="Rhea" id="RHEA:36715"/>
        <dbReference type="ChEBI" id="CHEBI:15378"/>
        <dbReference type="ChEBI" id="CHEBI:57287"/>
        <dbReference type="ChEBI" id="CHEBI:57817"/>
        <dbReference type="ChEBI" id="CHEBI:74146"/>
        <dbReference type="ChEBI" id="CHEBI:74160"/>
    </reaction>
    <physiologicalReaction direction="left-to-right" evidence="10">
        <dbReference type="Rhea" id="RHEA:36716"/>
    </physiologicalReaction>
</comment>
<comment type="catalytic activity">
    <reaction evidence="9">
        <text>hexacosenoyl-CoA + sphinganine = N-hexacosenoylsphinganine + CoA + H(+)</text>
        <dbReference type="Rhea" id="RHEA:36719"/>
        <dbReference type="ChEBI" id="CHEBI:15378"/>
        <dbReference type="ChEBI" id="CHEBI:57287"/>
        <dbReference type="ChEBI" id="CHEBI:57817"/>
        <dbReference type="ChEBI" id="CHEBI:74161"/>
        <dbReference type="ChEBI" id="CHEBI:74162"/>
    </reaction>
    <physiologicalReaction direction="left-to-right" evidence="9">
        <dbReference type="Rhea" id="RHEA:36720"/>
    </physiologicalReaction>
</comment>
<comment type="catalytic activity">
    <reaction evidence="13">
        <text>tetracosanoyl-CoA + sphing-4-enine = N-tetracosanoyl-sphing-4-enine + CoA + H(+)</text>
        <dbReference type="Rhea" id="RHEA:37115"/>
        <dbReference type="ChEBI" id="CHEBI:15378"/>
        <dbReference type="ChEBI" id="CHEBI:57287"/>
        <dbReference type="ChEBI" id="CHEBI:57756"/>
        <dbReference type="ChEBI" id="CHEBI:65052"/>
        <dbReference type="ChEBI" id="CHEBI:72965"/>
    </reaction>
    <physiologicalReaction direction="left-to-right" evidence="13">
        <dbReference type="Rhea" id="RHEA:37116"/>
    </physiologicalReaction>
</comment>
<comment type="catalytic activity">
    <reaction evidence="13">
        <text>tetracosenoyl-CoA + sphing-4-enine = N-(tetracosenoyl)-sphing-4-enine + CoA + H(+)</text>
        <dbReference type="Rhea" id="RHEA:37123"/>
        <dbReference type="ChEBI" id="CHEBI:15378"/>
        <dbReference type="ChEBI" id="CHEBI:57287"/>
        <dbReference type="ChEBI" id="CHEBI:57756"/>
        <dbReference type="ChEBI" id="CHEBI:74146"/>
        <dbReference type="ChEBI" id="CHEBI:74457"/>
    </reaction>
    <physiologicalReaction direction="left-to-right" evidence="13">
        <dbReference type="Rhea" id="RHEA:37124"/>
    </physiologicalReaction>
</comment>
<comment type="catalytic activity">
    <reaction evidence="12">
        <text>heptadecasphing-4-enine + tetracosanoyl-CoA = N-tetracosanoyl-heptadecasphing-4-enine + CoA + H(+)</text>
        <dbReference type="Rhea" id="RHEA:36739"/>
        <dbReference type="ChEBI" id="CHEBI:15378"/>
        <dbReference type="ChEBI" id="CHEBI:57287"/>
        <dbReference type="ChEBI" id="CHEBI:65052"/>
        <dbReference type="ChEBI" id="CHEBI:74166"/>
        <dbReference type="ChEBI" id="CHEBI:74167"/>
    </reaction>
    <physiologicalReaction direction="left-to-right" evidence="12">
        <dbReference type="Rhea" id="RHEA:36740"/>
    </physiologicalReaction>
</comment>
<comment type="catalytic activity">
    <reaction evidence="13">
        <text>a fatty acyl-CoA + sphing-4-enine = an N-acylsphing-4-enine + CoA + H(+)</text>
        <dbReference type="Rhea" id="RHEA:23768"/>
        <dbReference type="ChEBI" id="CHEBI:15378"/>
        <dbReference type="ChEBI" id="CHEBI:52639"/>
        <dbReference type="ChEBI" id="CHEBI:57287"/>
        <dbReference type="ChEBI" id="CHEBI:57756"/>
        <dbReference type="ChEBI" id="CHEBI:77636"/>
        <dbReference type="EC" id="2.3.1.24"/>
    </reaction>
    <physiologicalReaction direction="left-to-right" evidence="13">
        <dbReference type="Rhea" id="RHEA:23769"/>
    </physiologicalReaction>
</comment>
<comment type="catalytic activity">
    <reaction evidence="1">
        <text>sphing-4-enine + hexadecanoyl-CoA = N-hexadecanoylsphing-4-enine + CoA + H(+)</text>
        <dbReference type="Rhea" id="RHEA:36687"/>
        <dbReference type="ChEBI" id="CHEBI:15378"/>
        <dbReference type="ChEBI" id="CHEBI:57287"/>
        <dbReference type="ChEBI" id="CHEBI:57379"/>
        <dbReference type="ChEBI" id="CHEBI:57756"/>
        <dbReference type="ChEBI" id="CHEBI:72959"/>
    </reaction>
    <physiologicalReaction direction="left-to-right" evidence="1">
        <dbReference type="Rhea" id="RHEA:36688"/>
    </physiologicalReaction>
</comment>
<comment type="catalytic activity">
    <reaction evidence="1">
        <text>sphing-4-enine + octadecanoyl-CoA = N-octadecanoylsphing-4-enine + CoA + H(+)</text>
        <dbReference type="Rhea" id="RHEA:36691"/>
        <dbReference type="ChEBI" id="CHEBI:15378"/>
        <dbReference type="ChEBI" id="CHEBI:57287"/>
        <dbReference type="ChEBI" id="CHEBI:57394"/>
        <dbReference type="ChEBI" id="CHEBI:57756"/>
        <dbReference type="ChEBI" id="CHEBI:72961"/>
    </reaction>
    <physiologicalReaction direction="left-to-right" evidence="1">
        <dbReference type="Rhea" id="RHEA:36692"/>
    </physiologicalReaction>
</comment>
<comment type="catalytic activity">
    <reaction evidence="1">
        <text>eicosanoyl-CoA + sphing-4-enine = N-eicosanoyl-sphing-4-enine + CoA + H(+)</text>
        <dbReference type="Rhea" id="RHEA:45284"/>
        <dbReference type="ChEBI" id="CHEBI:15378"/>
        <dbReference type="ChEBI" id="CHEBI:57287"/>
        <dbReference type="ChEBI" id="CHEBI:57380"/>
        <dbReference type="ChEBI" id="CHEBI:57756"/>
        <dbReference type="ChEBI" id="CHEBI:72962"/>
    </reaction>
    <physiologicalReaction direction="left-to-right" evidence="1">
        <dbReference type="Rhea" id="RHEA:45285"/>
    </physiologicalReaction>
</comment>
<comment type="catalytic activity">
    <reaction evidence="6">
        <text>sphinganine + hexadecanoyl-CoA = N-hexadecanoylsphinganine + CoA + H(+)</text>
        <dbReference type="Rhea" id="RHEA:36539"/>
        <dbReference type="ChEBI" id="CHEBI:15378"/>
        <dbReference type="ChEBI" id="CHEBI:57287"/>
        <dbReference type="ChEBI" id="CHEBI:57379"/>
        <dbReference type="ChEBI" id="CHEBI:57817"/>
        <dbReference type="ChEBI" id="CHEBI:67042"/>
    </reaction>
    <physiologicalReaction direction="left-to-right" evidence="6">
        <dbReference type="Rhea" id="RHEA:36540"/>
    </physiologicalReaction>
</comment>
<comment type="catalytic activity">
    <reaction evidence="1">
        <text>sphinganine + octadecanoyl-CoA = N-(octadecanoyl)-sphinganine + CoA + H(+)</text>
        <dbReference type="Rhea" id="RHEA:36547"/>
        <dbReference type="ChEBI" id="CHEBI:15378"/>
        <dbReference type="ChEBI" id="CHEBI:57287"/>
        <dbReference type="ChEBI" id="CHEBI:57394"/>
        <dbReference type="ChEBI" id="CHEBI:57817"/>
        <dbReference type="ChEBI" id="CHEBI:67033"/>
    </reaction>
    <physiologicalReaction direction="left-to-right" evidence="1">
        <dbReference type="Rhea" id="RHEA:36548"/>
    </physiologicalReaction>
</comment>
<comment type="catalytic activity">
    <reaction evidence="6">
        <text>sphinganine + (9Z)-octadecenoyl-CoA = N-(9Z-octadecenoyl)-sphinganine + CoA + H(+)</text>
        <dbReference type="Rhea" id="RHEA:36575"/>
        <dbReference type="ChEBI" id="CHEBI:15378"/>
        <dbReference type="ChEBI" id="CHEBI:57287"/>
        <dbReference type="ChEBI" id="CHEBI:57387"/>
        <dbReference type="ChEBI" id="CHEBI:57817"/>
        <dbReference type="ChEBI" id="CHEBI:74100"/>
    </reaction>
    <physiologicalReaction direction="left-to-right" evidence="6">
        <dbReference type="Rhea" id="RHEA:36576"/>
    </physiologicalReaction>
</comment>
<comment type="catalytic activity">
    <reaction evidence="6 9">
        <text>eicosanoyl-CoA + sphinganine = N-eicosanoylsphinganine + CoA + H(+)</text>
        <dbReference type="Rhea" id="RHEA:36555"/>
        <dbReference type="ChEBI" id="CHEBI:15378"/>
        <dbReference type="ChEBI" id="CHEBI:57287"/>
        <dbReference type="ChEBI" id="CHEBI:57380"/>
        <dbReference type="ChEBI" id="CHEBI:57817"/>
        <dbReference type="ChEBI" id="CHEBI:67027"/>
    </reaction>
    <physiologicalReaction direction="left-to-right" evidence="6 9">
        <dbReference type="Rhea" id="RHEA:36556"/>
    </physiologicalReaction>
</comment>
<comment type="activity regulation">
    <text evidence="9">Ceramide synthase activity is inhibited by sphingosine-1-phosphate.</text>
</comment>
<comment type="biophysicochemical properties">
    <kinetics>
        <KM evidence="8">4.8 uM for sphinganine</KM>
        <KM evidence="16">1.07 uM for sphingosine</KM>
        <KM evidence="16">62.9 uM for (15Z)-tetracosenoyl-CoA</KM>
        <Vmax evidence="16">0.51 pmol/min/ug enzyme with sphingosine as substrate</Vmax>
        <Vmax evidence="16">0.76 pmol/min/ug enzyme with (15Z)-tetracosenoyl-CoA as substrate</Vmax>
    </kinetics>
</comment>
<comment type="pathway">
    <text evidence="8 9 10 12 13 14 15 16 17">Lipid metabolism; sphingolipid metabolism.</text>
</comment>
<comment type="subunit">
    <text evidence="1 5 13 18">Interacts with ATP6V0C, ASGR1, ASGR2 and SLC22A1/OCT1 (PubMed:11543633). Interacts with ELOV1, HSD17B12 and TECR (PubMed:20937905). Interacts with NDUFS2 (By similarity). Interacts with PAQR4; the interaction regulates the stability and activity of CERS2 and is inhibited in presence of ceramides (PubMed:38961186).</text>
</comment>
<comment type="interaction">
    <interactant intactId="EBI-1057080">
        <id>Q96G23</id>
    </interactant>
    <interactant intactId="EBI-1172335">
        <id>P07306</id>
        <label>ASGR1</label>
    </interactant>
    <organismsDiffer>false</organismsDiffer>
    <experiments>3</experiments>
</comment>
<comment type="interaction">
    <interactant intactId="EBI-1057080">
        <id>Q96G23</id>
    </interactant>
    <interactant intactId="EBI-1172636">
        <id>P07307</id>
        <label>ASGR2</label>
    </interactant>
    <organismsDiffer>false</organismsDiffer>
    <experiments>3</experiments>
</comment>
<comment type="interaction">
    <interactant intactId="EBI-1057080">
        <id>Q96G23</id>
    </interactant>
    <interactant intactId="EBI-721179">
        <id>P27449</id>
        <label>ATP6V0C</label>
    </interactant>
    <organismsDiffer>false</organismsDiffer>
    <experiments>4</experiments>
</comment>
<comment type="interaction">
    <interactant intactId="EBI-1057080">
        <id>Q96G23</id>
    </interactant>
    <interactant intactId="EBI-296047">
        <id>P07900</id>
        <label>HSP90AA1</label>
    </interactant>
    <organismsDiffer>false</organismsDiffer>
    <experiments>2</experiments>
</comment>
<comment type="interaction">
    <interactant intactId="EBI-1057080">
        <id>Q96G23</id>
    </interactant>
    <interactant intactId="EBI-725665">
        <id>Q9Y5U9</id>
        <label>IER3IP1</label>
    </interactant>
    <organismsDiffer>false</organismsDiffer>
    <experiments>3</experiments>
</comment>
<comment type="interaction">
    <interactant intactId="EBI-1057080">
        <id>Q96G23</id>
    </interactant>
    <interactant intactId="EBI-2007911">
        <id>Q16236</id>
        <label>NFE2L2</label>
    </interactant>
    <organismsDiffer>false</organismsDiffer>
    <experiments>2</experiments>
</comment>
<comment type="interaction">
    <interactant intactId="EBI-1057080">
        <id>Q96G23</id>
    </interactant>
    <interactant intactId="EBI-1172714">
        <id>O15245</id>
        <label>SLC22A1</label>
    </interactant>
    <organismsDiffer>false</organismsDiffer>
    <experiments>3</experiments>
</comment>
<comment type="interaction">
    <interactant intactId="EBI-1057080">
        <id>Q96G23</id>
    </interactant>
    <interactant intactId="EBI-2799703">
        <id>O95070</id>
        <label>YIF1A</label>
    </interactant>
    <organismsDiffer>false</organismsDiffer>
    <experiments>3</experiments>
</comment>
<comment type="subcellular location">
    <subcellularLocation>
        <location evidence="9">Endoplasmic reticulum membrane</location>
        <topology evidence="2">Multi-pass membrane protein</topology>
    </subcellularLocation>
</comment>
<comment type="tissue specificity">
    <text evidence="5">Expressed in kidney, liver, brain, heart, placenta and lung.</text>
</comment>
<comment type="domain">
    <text evidence="17">The last loop motif confers selectivity toward behenoyl-CoA (docosanoyl-CoA; C22:0-CoA) and lignoceroyl-CoA (tetracosanoyl-CoA; C24:0-CoA) as acyl donors.</text>
</comment>
<comment type="domain">
    <text evidence="24">The predicted Homeobox domain (Homeobox-like region) lacks important residues for DNA-binding. Moreover, the protein localizes to the endoplasmic reticulum membrane, strongly suggesting that it does not constitute a canonical homeobox domain.</text>
</comment>
<comment type="PTM">
    <text evidence="1">Acetylated. Deacetylation by SIRT3 increases enzyme activity and promotes mitochondrial ceramide accumulation.</text>
</comment>
<comment type="PTM">
    <text evidence="16">Phosphorylated at the C-terminus by CK2, leading to increase the ceramide synthase activity.</text>
</comment>
<comment type="sequence caution" evidence="22">
    <conflict type="erroneous initiation">
        <sequence resource="EMBL-CDS" id="BAA91505"/>
    </conflict>
    <text>Truncated N-terminus.</text>
</comment>
<dbReference type="EC" id="2.3.1.24" evidence="13"/>
<dbReference type="EC" id="2.3.1.297" evidence="6 8 9 10 12 13 16"/>
<dbReference type="EMBL" id="AF177338">
    <property type="protein sequence ID" value="AAG17982.2"/>
    <property type="molecule type" value="mRNA"/>
</dbReference>
<dbReference type="EMBL" id="AY091458">
    <property type="protein sequence ID" value="AAM12028.1"/>
    <property type="molecule type" value="mRNA"/>
</dbReference>
<dbReference type="EMBL" id="AL590133">
    <property type="status" value="NOT_ANNOTATED_CDS"/>
    <property type="molecule type" value="Genomic_DNA"/>
</dbReference>
<dbReference type="EMBL" id="CH471121">
    <property type="protein sequence ID" value="EAW53497.1"/>
    <property type="molecule type" value="Genomic_DNA"/>
</dbReference>
<dbReference type="EMBL" id="CH471121">
    <property type="protein sequence ID" value="EAW53498.1"/>
    <property type="molecule type" value="Genomic_DNA"/>
</dbReference>
<dbReference type="EMBL" id="CH471121">
    <property type="protein sequence ID" value="EAW53499.1"/>
    <property type="molecule type" value="Genomic_DNA"/>
</dbReference>
<dbReference type="EMBL" id="CH471121">
    <property type="protein sequence ID" value="EAW53502.1"/>
    <property type="molecule type" value="Genomic_DNA"/>
</dbReference>
<dbReference type="EMBL" id="BC001357">
    <property type="protein sequence ID" value="AAH01357.2"/>
    <property type="molecule type" value="mRNA"/>
</dbReference>
<dbReference type="EMBL" id="BC010032">
    <property type="protein sequence ID" value="AAH10032.1"/>
    <property type="molecule type" value="mRNA"/>
</dbReference>
<dbReference type="EMBL" id="AK001105">
    <property type="protein sequence ID" value="BAA91505.1"/>
    <property type="status" value="ALT_INIT"/>
    <property type="molecule type" value="mRNA"/>
</dbReference>
<dbReference type="EMBL" id="AF189062">
    <property type="protein sequence ID" value="AAF01058.4"/>
    <property type="molecule type" value="mRNA"/>
</dbReference>
<dbReference type="CCDS" id="CCDS973.1"/>
<dbReference type="RefSeq" id="NP_071358.1">
    <property type="nucleotide sequence ID" value="NM_022075.5"/>
</dbReference>
<dbReference type="RefSeq" id="NP_859530.1">
    <property type="nucleotide sequence ID" value="NM_181746.4"/>
</dbReference>
<dbReference type="RefSeq" id="XP_011507754.1">
    <property type="nucleotide sequence ID" value="XM_011509452.4"/>
</dbReference>
<dbReference type="SMR" id="Q96G23"/>
<dbReference type="BioGRID" id="118992">
    <property type="interactions" value="244"/>
</dbReference>
<dbReference type="FunCoup" id="Q96G23">
    <property type="interactions" value="1425"/>
</dbReference>
<dbReference type="IntAct" id="Q96G23">
    <property type="interactions" value="158"/>
</dbReference>
<dbReference type="MINT" id="Q96G23"/>
<dbReference type="STRING" id="9606.ENSP00000271688"/>
<dbReference type="BindingDB" id="Q96G23"/>
<dbReference type="ChEMBL" id="CHEMBL5291553"/>
<dbReference type="SwissLipids" id="SLP:000000256"/>
<dbReference type="GlyConnect" id="1105">
    <property type="glycosylation" value="15 N-Linked glycans (1 site)"/>
</dbReference>
<dbReference type="GlyCosmos" id="Q96G23">
    <property type="glycosylation" value="3 sites, 16 glycans"/>
</dbReference>
<dbReference type="GlyGen" id="Q96G23">
    <property type="glycosylation" value="3 sites, 32 N-linked glycans (1 site), 1 O-linked glycan (2 sites)"/>
</dbReference>
<dbReference type="iPTMnet" id="Q96G23"/>
<dbReference type="PhosphoSitePlus" id="Q96G23"/>
<dbReference type="SwissPalm" id="Q96G23"/>
<dbReference type="BioMuta" id="CERS2"/>
<dbReference type="DMDM" id="51316514"/>
<dbReference type="jPOST" id="Q96G23"/>
<dbReference type="MassIVE" id="Q96G23"/>
<dbReference type="PaxDb" id="9606-ENSP00000271688"/>
<dbReference type="PeptideAtlas" id="Q96G23"/>
<dbReference type="ProteomicsDB" id="76584"/>
<dbReference type="Pumba" id="Q96G23"/>
<dbReference type="Antibodypedia" id="20302">
    <property type="antibodies" value="234 antibodies from 29 providers"/>
</dbReference>
<dbReference type="DNASU" id="29956"/>
<dbReference type="Ensembl" id="ENST00000271688.10">
    <property type="protein sequence ID" value="ENSP00000271688.6"/>
    <property type="gene ID" value="ENSG00000143418.20"/>
</dbReference>
<dbReference type="Ensembl" id="ENST00000368954.10">
    <property type="protein sequence ID" value="ENSP00000357950.5"/>
    <property type="gene ID" value="ENSG00000143418.20"/>
</dbReference>
<dbReference type="GeneID" id="29956"/>
<dbReference type="KEGG" id="hsa:29956"/>
<dbReference type="MANE-Select" id="ENST00000368954.10">
    <property type="protein sequence ID" value="ENSP00000357950.5"/>
    <property type="RefSeq nucleotide sequence ID" value="NM_022075.5"/>
    <property type="RefSeq protein sequence ID" value="NP_071358.1"/>
</dbReference>
<dbReference type="UCSC" id="uc001evy.3">
    <property type="organism name" value="human"/>
</dbReference>
<dbReference type="AGR" id="HGNC:14076"/>
<dbReference type="CTD" id="29956"/>
<dbReference type="DisGeNET" id="29956"/>
<dbReference type="GeneCards" id="CERS2"/>
<dbReference type="HGNC" id="HGNC:14076">
    <property type="gene designation" value="CERS2"/>
</dbReference>
<dbReference type="HPA" id="ENSG00000143418">
    <property type="expression patterns" value="Tissue enhanced (liver)"/>
</dbReference>
<dbReference type="MalaCards" id="CERS2"/>
<dbReference type="MIM" id="606920">
    <property type="type" value="gene"/>
</dbReference>
<dbReference type="neXtProt" id="NX_Q96G23"/>
<dbReference type="OpenTargets" id="ENSG00000143418"/>
<dbReference type="PharmGKB" id="PA30300"/>
<dbReference type="VEuPathDB" id="HostDB:ENSG00000143418"/>
<dbReference type="eggNOG" id="KOG1607">
    <property type="taxonomic scope" value="Eukaryota"/>
</dbReference>
<dbReference type="GeneTree" id="ENSGT01030000234515"/>
<dbReference type="InParanoid" id="Q96G23"/>
<dbReference type="OMA" id="IFAKRCI"/>
<dbReference type="OrthoDB" id="537032at2759"/>
<dbReference type="PAN-GO" id="Q96G23">
    <property type="GO annotations" value="3 GO annotations based on evolutionary models"/>
</dbReference>
<dbReference type="PhylomeDB" id="Q96G23"/>
<dbReference type="TreeFam" id="TF314319"/>
<dbReference type="BioCyc" id="MetaCyc:ENSG00000143418-MONOMER"/>
<dbReference type="BRENDA" id="2.3.1.24">
    <property type="organism ID" value="2681"/>
</dbReference>
<dbReference type="BRENDA" id="2.3.1.297">
    <property type="organism ID" value="2681"/>
</dbReference>
<dbReference type="PathwayCommons" id="Q96G23"/>
<dbReference type="Reactome" id="R-HSA-1660661">
    <property type="pathway name" value="Sphingolipid de novo biosynthesis"/>
</dbReference>
<dbReference type="SignaLink" id="Q96G23"/>
<dbReference type="SIGNOR" id="Q96G23"/>
<dbReference type="UniPathway" id="UPA00222"/>
<dbReference type="BioGRID-ORCS" id="29956">
    <property type="hits" value="110 hits in 1200 CRISPR screens"/>
</dbReference>
<dbReference type="ChiTaRS" id="CERS2">
    <property type="organism name" value="human"/>
</dbReference>
<dbReference type="GeneWiki" id="LASS2"/>
<dbReference type="GenomeRNAi" id="29956"/>
<dbReference type="Pharos" id="Q96G23">
    <property type="development level" value="Tbio"/>
</dbReference>
<dbReference type="PRO" id="PR:Q96G23"/>
<dbReference type="Proteomes" id="UP000005640">
    <property type="component" value="Chromosome 1"/>
</dbReference>
<dbReference type="RNAct" id="Q96G23">
    <property type="molecule type" value="protein"/>
</dbReference>
<dbReference type="Bgee" id="ENSG00000143418">
    <property type="expression patterns" value="Expressed in right adrenal gland cortex and 200 other cell types or tissues"/>
</dbReference>
<dbReference type="ExpressionAtlas" id="Q96G23">
    <property type="expression patterns" value="baseline and differential"/>
</dbReference>
<dbReference type="GO" id="GO:0005783">
    <property type="term" value="C:endoplasmic reticulum"/>
    <property type="evidence" value="ECO:0000314"/>
    <property type="project" value="UniProtKB"/>
</dbReference>
<dbReference type="GO" id="GO:0005789">
    <property type="term" value="C:endoplasmic reticulum membrane"/>
    <property type="evidence" value="ECO:0000304"/>
    <property type="project" value="Reactome"/>
</dbReference>
<dbReference type="GO" id="GO:0016020">
    <property type="term" value="C:membrane"/>
    <property type="evidence" value="ECO:0007005"/>
    <property type="project" value="UniProtKB"/>
</dbReference>
<dbReference type="GO" id="GO:0003677">
    <property type="term" value="F:DNA binding"/>
    <property type="evidence" value="ECO:0007669"/>
    <property type="project" value="InterPro"/>
</dbReference>
<dbReference type="GO" id="GO:0050291">
    <property type="term" value="F:sphingosine N-acyltransferase activity"/>
    <property type="evidence" value="ECO:0000314"/>
    <property type="project" value="UniProtKB"/>
</dbReference>
<dbReference type="GO" id="GO:0046513">
    <property type="term" value="P:ceramide biosynthetic process"/>
    <property type="evidence" value="ECO:0000314"/>
    <property type="project" value="UniProtKB"/>
</dbReference>
<dbReference type="GO" id="GO:0048681">
    <property type="term" value="P:negative regulation of axon regeneration"/>
    <property type="evidence" value="ECO:0000250"/>
    <property type="project" value="BHF-UCL"/>
</dbReference>
<dbReference type="GO" id="GO:1900148">
    <property type="term" value="P:negative regulation of Schwann cell migration"/>
    <property type="evidence" value="ECO:0000250"/>
    <property type="project" value="BHF-UCL"/>
</dbReference>
<dbReference type="GO" id="GO:1905045">
    <property type="term" value="P:negative regulation of Schwann cell proliferation involved in axon regeneration"/>
    <property type="evidence" value="ECO:0000250"/>
    <property type="project" value="BHF-UCL"/>
</dbReference>
<dbReference type="GO" id="GO:0019216">
    <property type="term" value="P:regulation of lipid metabolic process"/>
    <property type="evidence" value="ECO:0000250"/>
    <property type="project" value="UniProtKB"/>
</dbReference>
<dbReference type="GO" id="GO:0035902">
    <property type="term" value="P:response to immobilization stress"/>
    <property type="evidence" value="ECO:0007669"/>
    <property type="project" value="Ensembl"/>
</dbReference>
<dbReference type="GO" id="GO:0030148">
    <property type="term" value="P:sphingolipid biosynthetic process"/>
    <property type="evidence" value="ECO:0000304"/>
    <property type="project" value="Reactome"/>
</dbReference>
<dbReference type="CDD" id="cd00086">
    <property type="entry name" value="homeodomain"/>
    <property type="match status" value="1"/>
</dbReference>
<dbReference type="FunFam" id="1.10.10.60:FF:000020">
    <property type="entry name" value="Ceramide synthase 5"/>
    <property type="match status" value="1"/>
</dbReference>
<dbReference type="Gene3D" id="1.10.10.60">
    <property type="entry name" value="Homeodomain-like"/>
    <property type="match status" value="1"/>
</dbReference>
<dbReference type="InterPro" id="IPR001356">
    <property type="entry name" value="HD"/>
</dbReference>
<dbReference type="InterPro" id="IPR009057">
    <property type="entry name" value="Homeodomain-like_sf"/>
</dbReference>
<dbReference type="InterPro" id="IPR016439">
    <property type="entry name" value="Lag1/Lac1-like"/>
</dbReference>
<dbReference type="InterPro" id="IPR006634">
    <property type="entry name" value="TLC-dom"/>
</dbReference>
<dbReference type="PANTHER" id="PTHR12560:SF7">
    <property type="entry name" value="CERAMIDE SYNTHASE 2"/>
    <property type="match status" value="1"/>
</dbReference>
<dbReference type="PANTHER" id="PTHR12560">
    <property type="entry name" value="LONGEVITY ASSURANCE FACTOR 1 LAG1"/>
    <property type="match status" value="1"/>
</dbReference>
<dbReference type="Pfam" id="PF00046">
    <property type="entry name" value="Homeodomain"/>
    <property type="match status" value="1"/>
</dbReference>
<dbReference type="Pfam" id="PF03798">
    <property type="entry name" value="TRAM_LAG1_CLN8"/>
    <property type="match status" value="1"/>
</dbReference>
<dbReference type="PIRSF" id="PIRSF005225">
    <property type="entry name" value="LAG1_LAC1"/>
    <property type="match status" value="1"/>
</dbReference>
<dbReference type="SMART" id="SM00724">
    <property type="entry name" value="TLC"/>
    <property type="match status" value="1"/>
</dbReference>
<dbReference type="SUPFAM" id="SSF46689">
    <property type="entry name" value="Homeodomain-like"/>
    <property type="match status" value="1"/>
</dbReference>
<dbReference type="PROSITE" id="PS50922">
    <property type="entry name" value="TLC"/>
    <property type="match status" value="1"/>
</dbReference>
<feature type="chain" id="PRO_0000185509" description="Ceramide synthase 2">
    <location>
        <begin position="1"/>
        <end position="380"/>
    </location>
</feature>
<feature type="topological domain" description="Lumenal" evidence="23 25">
    <location>
        <begin position="1"/>
        <end position="40"/>
    </location>
</feature>
<feature type="transmembrane region" description="Helical" evidence="2">
    <location>
        <begin position="41"/>
        <end position="61"/>
    </location>
</feature>
<feature type="transmembrane region" description="Helical" evidence="2">
    <location>
        <begin position="140"/>
        <end position="160"/>
    </location>
</feature>
<feature type="transmembrane region" description="Helical" evidence="2">
    <location>
        <begin position="181"/>
        <end position="201"/>
    </location>
</feature>
<feature type="transmembrane region" description="Helical" evidence="2">
    <location>
        <begin position="209"/>
        <end position="229"/>
    </location>
</feature>
<feature type="transmembrane region" description="Helical" evidence="2">
    <location>
        <begin position="264"/>
        <end position="284"/>
    </location>
</feature>
<feature type="transmembrane region" description="Helical" evidence="2">
    <location>
        <begin position="304"/>
        <end position="324"/>
    </location>
</feature>
<feature type="topological domain" description="Cytoplasmic" evidence="26">
    <location>
        <begin position="325"/>
        <end position="380"/>
    </location>
</feature>
<feature type="domain" description="TLC" evidence="3">
    <location>
        <begin position="131"/>
        <end position="332"/>
    </location>
</feature>
<feature type="region of interest" description="Homeobox-like" evidence="22">
    <location>
        <begin position="67"/>
        <end position="128"/>
    </location>
</feature>
<feature type="region of interest" description="Disordered" evidence="4">
    <location>
        <begin position="338"/>
        <end position="380"/>
    </location>
</feature>
<feature type="short sequence motif" description="Last loop motif" evidence="17">
    <location>
        <begin position="291"/>
        <end position="300"/>
    </location>
</feature>
<feature type="compositionally biased region" description="Acidic residues" evidence="4">
    <location>
        <begin position="344"/>
        <end position="353"/>
    </location>
</feature>
<feature type="modified residue" description="Phosphoserine" evidence="28 29 30 31 32">
    <location>
        <position position="341"/>
    </location>
</feature>
<feature type="modified residue" description="Phosphothreonine" evidence="28 29 30 32">
    <location>
        <position position="346"/>
    </location>
</feature>
<feature type="modified residue" description="Phosphoserine" evidence="28 29 30 32">
    <location>
        <position position="348"/>
    </location>
</feature>
<feature type="modified residue" description="Phosphoserine" evidence="28 29 30 32 33">
    <location>
        <position position="349"/>
    </location>
</feature>
<feature type="glycosylation site" description="N-linked (GlcNAc...) asparagine" evidence="7 11">
    <location>
        <position position="19"/>
    </location>
</feature>
<feature type="sequence variant" id="VAR_052325" description="In dbSNP:rs267738.">
    <original>E</original>
    <variation>A</variation>
    <location>
        <position position="115"/>
    </location>
</feature>
<feature type="mutagenesis site" description="Abolished inhibition by sphingosine-1-phosphate; when associated with A-325." evidence="9">
    <original>R</original>
    <variation>A</variation>
    <location>
        <position position="230"/>
    </location>
</feature>
<feature type="mutagenesis site" description="Abolished inhibition by sphingosine-1-phosphate; when associated with A-230." evidence="9">
    <original>R</original>
    <variation>A</variation>
    <location>
        <position position="325"/>
    </location>
</feature>
<feature type="mutagenesis site" description="Strongly decreased phosphorylation leading to reduced ceramide synthase activity." evidence="16">
    <original>SDREETESS</original>
    <variation>ADREEAEAA</variation>
    <location>
        <begin position="341"/>
        <end position="349"/>
    </location>
</feature>
<feature type="sequence conflict" description="In Ref. 8; AAF01058." evidence="22" ref="8">
    <original>I</original>
    <variation>T</variation>
    <location>
        <position position="154"/>
    </location>
</feature>
<feature type="sequence conflict" description="In Ref. 8; AAF01058." evidence="22" ref="8">
    <original>E</original>
    <variation>V</variation>
    <location>
        <position position="345"/>
    </location>
</feature>
<feature type="sequence conflict" description="In Ref. 8; AAF01058." evidence="22" ref="8">
    <original>E</original>
    <variation>K</variation>
    <location>
        <position position="353"/>
    </location>
</feature>
<keyword id="KW-0007">Acetylation</keyword>
<keyword id="KW-0256">Endoplasmic reticulum</keyword>
<keyword id="KW-0325">Glycoprotein</keyword>
<keyword id="KW-0444">Lipid biosynthesis</keyword>
<keyword id="KW-0443">Lipid metabolism</keyword>
<keyword id="KW-0472">Membrane</keyword>
<keyword id="KW-0597">Phosphoprotein</keyword>
<keyword id="KW-1267">Proteomics identification</keyword>
<keyword id="KW-1185">Reference proteome</keyword>
<keyword id="KW-0808">Transferase</keyword>
<keyword id="KW-0812">Transmembrane</keyword>
<keyword id="KW-1133">Transmembrane helix</keyword>
<evidence type="ECO:0000250" key="1">
    <source>
        <dbReference type="UniProtKB" id="Q924Z4"/>
    </source>
</evidence>
<evidence type="ECO:0000255" key="2"/>
<evidence type="ECO:0000255" key="3">
    <source>
        <dbReference type="PROSITE-ProRule" id="PRU00205"/>
    </source>
</evidence>
<evidence type="ECO:0000256" key="4">
    <source>
        <dbReference type="SAM" id="MobiDB-lite"/>
    </source>
</evidence>
<evidence type="ECO:0000269" key="5">
    <source>
    </source>
</evidence>
<evidence type="ECO:0000269" key="6">
    <source>
    </source>
</evidence>
<evidence type="ECO:0000269" key="7">
    <source>
    </source>
</evidence>
<evidence type="ECO:0000269" key="8">
    <source>
    </source>
</evidence>
<evidence type="ECO:0000269" key="9">
    <source>
    </source>
</evidence>
<evidence type="ECO:0000269" key="10">
    <source>
    </source>
</evidence>
<evidence type="ECO:0000269" key="11">
    <source>
    </source>
</evidence>
<evidence type="ECO:0000269" key="12">
    <source>
    </source>
</evidence>
<evidence type="ECO:0000269" key="13">
    <source>
    </source>
</evidence>
<evidence type="ECO:0000269" key="14">
    <source>
    </source>
</evidence>
<evidence type="ECO:0000269" key="15">
    <source>
    </source>
</evidence>
<evidence type="ECO:0000269" key="16">
    <source>
    </source>
</evidence>
<evidence type="ECO:0000269" key="17">
    <source>
    </source>
</evidence>
<evidence type="ECO:0000269" key="18">
    <source>
    </source>
</evidence>
<evidence type="ECO:0000303" key="19">
    <source>
    </source>
</evidence>
<evidence type="ECO:0000303" key="20">
    <source>
    </source>
</evidence>
<evidence type="ECO:0000303" key="21">
    <source ref="8"/>
</evidence>
<evidence type="ECO:0000305" key="22"/>
<evidence type="ECO:0000305" key="23">
    <source>
    </source>
</evidence>
<evidence type="ECO:0000305" key="24">
    <source>
    </source>
</evidence>
<evidence type="ECO:0000305" key="25">
    <source>
    </source>
</evidence>
<evidence type="ECO:0000305" key="26">
    <source>
    </source>
</evidence>
<evidence type="ECO:0000312" key="27">
    <source>
        <dbReference type="HGNC" id="HGNC:14076"/>
    </source>
</evidence>
<evidence type="ECO:0007744" key="28">
    <source>
    </source>
</evidence>
<evidence type="ECO:0007744" key="29">
    <source>
    </source>
</evidence>
<evidence type="ECO:0007744" key="30">
    <source>
    </source>
</evidence>
<evidence type="ECO:0007744" key="31">
    <source>
    </source>
</evidence>
<evidence type="ECO:0007744" key="32">
    <source>
    </source>
</evidence>
<evidence type="ECO:0007744" key="33">
    <source>
    </source>
</evidence>
<name>CERS2_HUMAN</name>
<proteinExistence type="evidence at protein level"/>
<sequence length="380" mass="44876">MLQTLYDYFWWERLWLPVNLTWADLEDRDGRVYAKASDLYITLPLALLFLIVRYFFELYVATPLAALLNIKEKTRLRAPPNATLEHFYLTSGKQPKQVEVELLSRQSGLSGRQVERWFRRRRNQDRPSLLKKFREASWRFTFYLIAFIAGMAVIVDKPWFYDMKKVWEGYPIQSTIPSQYWYYMIELSFYWSLLFSIASDVKRKDFKEQIIHHVATIILISFSWFANYIRAGTLIMALHDSSDYLLESAKMFNYAGWKNTCNNIFIVFAIVFIITRLVILPFWILHCTLVYPLELYPAFFGYYFFNSMMGVLQLLHIFWAYLILRMAHKFITGKLVEDERSDREETESSEGEEAAAGGGAKSRPLANGHPILNNNHRKND</sequence>
<reference key="1">
    <citation type="journal article" date="2001" name="Genomics">
        <title>Cloning, mapping, and characterization of a human homologue of the yeast longevity assurance gene LAG1.</title>
        <authorList>
            <person name="Pan H."/>
            <person name="Qin W.-X."/>
            <person name="Huo K.-K."/>
            <person name="Wan D.-F."/>
            <person name="Yu Y."/>
            <person name="Xu Z.-G."/>
            <person name="Hu Q.-D."/>
            <person name="Gu K.T."/>
            <person name="Zhou X.-M."/>
            <person name="Jiang H.-Q."/>
            <person name="Zhang P.-P."/>
            <person name="Huang Y."/>
            <person name="Li Y.-Y."/>
            <person name="Gu J.-R."/>
        </authorList>
    </citation>
    <scope>NUCLEOTIDE SEQUENCE [MRNA]</scope>
    <scope>TISSUE SPECIFICITY</scope>
    <scope>INTERACTION WITH ATP6V0C; ASGR1; ASGR2 AND SLC22A1/OCT1</scope>
    <source>
        <tissue>Liver</tissue>
    </source>
</reference>
<reference key="2">
    <citation type="submission" date="2002-05" db="EMBL/GenBank/DDBJ databases">
        <authorList>
            <person name="Qin W.-X."/>
            <person name="Gu J.-R."/>
            <person name="Wan D.-F."/>
            <person name="Zhou X.-M."/>
            <person name="Jiang H.-Q."/>
            <person name="Zhang P.-P."/>
            <person name="Huang Y."/>
            <person name="Qiu X.-K."/>
            <person name="Qian L.F."/>
            <person name="He L.P."/>
            <person name="Li H.N."/>
            <person name="Yu Y."/>
            <person name="Yu J."/>
        </authorList>
    </citation>
    <scope>SEQUENCE REVISION</scope>
</reference>
<reference key="3">
    <citation type="submission" date="2002-03" db="EMBL/GenBank/DDBJ databases">
        <authorList>
            <person name="Xingfeng C."/>
            <person name="Yi G."/>
        </authorList>
    </citation>
    <scope>NUCLEOTIDE SEQUENCE [MRNA]</scope>
</reference>
<reference key="4">
    <citation type="journal article" date="2006" name="Nature">
        <title>The DNA sequence and biological annotation of human chromosome 1.</title>
        <authorList>
            <person name="Gregory S.G."/>
            <person name="Barlow K.F."/>
            <person name="McLay K.E."/>
            <person name="Kaul R."/>
            <person name="Swarbreck D."/>
            <person name="Dunham A."/>
            <person name="Scott C.E."/>
            <person name="Howe K.L."/>
            <person name="Woodfine K."/>
            <person name="Spencer C.C.A."/>
            <person name="Jones M.C."/>
            <person name="Gillson C."/>
            <person name="Searle S."/>
            <person name="Zhou Y."/>
            <person name="Kokocinski F."/>
            <person name="McDonald L."/>
            <person name="Evans R."/>
            <person name="Phillips K."/>
            <person name="Atkinson A."/>
            <person name="Cooper R."/>
            <person name="Jones C."/>
            <person name="Hall R.E."/>
            <person name="Andrews T.D."/>
            <person name="Lloyd C."/>
            <person name="Ainscough R."/>
            <person name="Almeida J.P."/>
            <person name="Ambrose K.D."/>
            <person name="Anderson F."/>
            <person name="Andrew R.W."/>
            <person name="Ashwell R.I.S."/>
            <person name="Aubin K."/>
            <person name="Babbage A.K."/>
            <person name="Bagguley C.L."/>
            <person name="Bailey J."/>
            <person name="Beasley H."/>
            <person name="Bethel G."/>
            <person name="Bird C.P."/>
            <person name="Bray-Allen S."/>
            <person name="Brown J.Y."/>
            <person name="Brown A.J."/>
            <person name="Buckley D."/>
            <person name="Burton J."/>
            <person name="Bye J."/>
            <person name="Carder C."/>
            <person name="Chapman J.C."/>
            <person name="Clark S.Y."/>
            <person name="Clarke G."/>
            <person name="Clee C."/>
            <person name="Cobley V."/>
            <person name="Collier R.E."/>
            <person name="Corby N."/>
            <person name="Coville G.J."/>
            <person name="Davies J."/>
            <person name="Deadman R."/>
            <person name="Dunn M."/>
            <person name="Earthrowl M."/>
            <person name="Ellington A.G."/>
            <person name="Errington H."/>
            <person name="Frankish A."/>
            <person name="Frankland J."/>
            <person name="French L."/>
            <person name="Garner P."/>
            <person name="Garnett J."/>
            <person name="Gay L."/>
            <person name="Ghori M.R.J."/>
            <person name="Gibson R."/>
            <person name="Gilby L.M."/>
            <person name="Gillett W."/>
            <person name="Glithero R.J."/>
            <person name="Grafham D.V."/>
            <person name="Griffiths C."/>
            <person name="Griffiths-Jones S."/>
            <person name="Grocock R."/>
            <person name="Hammond S."/>
            <person name="Harrison E.S.I."/>
            <person name="Hart E."/>
            <person name="Haugen E."/>
            <person name="Heath P.D."/>
            <person name="Holmes S."/>
            <person name="Holt K."/>
            <person name="Howden P.J."/>
            <person name="Hunt A.R."/>
            <person name="Hunt S.E."/>
            <person name="Hunter G."/>
            <person name="Isherwood J."/>
            <person name="James R."/>
            <person name="Johnson C."/>
            <person name="Johnson D."/>
            <person name="Joy A."/>
            <person name="Kay M."/>
            <person name="Kershaw J.K."/>
            <person name="Kibukawa M."/>
            <person name="Kimberley A.M."/>
            <person name="King A."/>
            <person name="Knights A.J."/>
            <person name="Lad H."/>
            <person name="Laird G."/>
            <person name="Lawlor S."/>
            <person name="Leongamornlert D.A."/>
            <person name="Lloyd D.M."/>
            <person name="Loveland J."/>
            <person name="Lovell J."/>
            <person name="Lush M.J."/>
            <person name="Lyne R."/>
            <person name="Martin S."/>
            <person name="Mashreghi-Mohammadi M."/>
            <person name="Matthews L."/>
            <person name="Matthews N.S.W."/>
            <person name="McLaren S."/>
            <person name="Milne S."/>
            <person name="Mistry S."/>
            <person name="Moore M.J.F."/>
            <person name="Nickerson T."/>
            <person name="O'Dell C.N."/>
            <person name="Oliver K."/>
            <person name="Palmeiri A."/>
            <person name="Palmer S.A."/>
            <person name="Parker A."/>
            <person name="Patel D."/>
            <person name="Pearce A.V."/>
            <person name="Peck A.I."/>
            <person name="Pelan S."/>
            <person name="Phelps K."/>
            <person name="Phillimore B.J."/>
            <person name="Plumb R."/>
            <person name="Rajan J."/>
            <person name="Raymond C."/>
            <person name="Rouse G."/>
            <person name="Saenphimmachak C."/>
            <person name="Sehra H.K."/>
            <person name="Sheridan E."/>
            <person name="Shownkeen R."/>
            <person name="Sims S."/>
            <person name="Skuce C.D."/>
            <person name="Smith M."/>
            <person name="Steward C."/>
            <person name="Subramanian S."/>
            <person name="Sycamore N."/>
            <person name="Tracey A."/>
            <person name="Tromans A."/>
            <person name="Van Helmond Z."/>
            <person name="Wall M."/>
            <person name="Wallis J.M."/>
            <person name="White S."/>
            <person name="Whitehead S.L."/>
            <person name="Wilkinson J.E."/>
            <person name="Willey D.L."/>
            <person name="Williams H."/>
            <person name="Wilming L."/>
            <person name="Wray P.W."/>
            <person name="Wu Z."/>
            <person name="Coulson A."/>
            <person name="Vaudin M."/>
            <person name="Sulston J.E."/>
            <person name="Durbin R.M."/>
            <person name="Hubbard T."/>
            <person name="Wooster R."/>
            <person name="Dunham I."/>
            <person name="Carter N.P."/>
            <person name="McVean G."/>
            <person name="Ross M.T."/>
            <person name="Harrow J."/>
            <person name="Olson M.V."/>
            <person name="Beck S."/>
            <person name="Rogers J."/>
            <person name="Bentley D.R."/>
        </authorList>
    </citation>
    <scope>NUCLEOTIDE SEQUENCE [LARGE SCALE GENOMIC DNA]</scope>
</reference>
<reference key="5">
    <citation type="submission" date="2005-09" db="EMBL/GenBank/DDBJ databases">
        <authorList>
            <person name="Mural R.J."/>
            <person name="Istrail S."/>
            <person name="Sutton G.G."/>
            <person name="Florea L."/>
            <person name="Halpern A.L."/>
            <person name="Mobarry C.M."/>
            <person name="Lippert R."/>
            <person name="Walenz B."/>
            <person name="Shatkay H."/>
            <person name="Dew I."/>
            <person name="Miller J.R."/>
            <person name="Flanigan M.J."/>
            <person name="Edwards N.J."/>
            <person name="Bolanos R."/>
            <person name="Fasulo D."/>
            <person name="Halldorsson B.V."/>
            <person name="Hannenhalli S."/>
            <person name="Turner R."/>
            <person name="Yooseph S."/>
            <person name="Lu F."/>
            <person name="Nusskern D.R."/>
            <person name="Shue B.C."/>
            <person name="Zheng X.H."/>
            <person name="Zhong F."/>
            <person name="Delcher A.L."/>
            <person name="Huson D.H."/>
            <person name="Kravitz S.A."/>
            <person name="Mouchard L."/>
            <person name="Reinert K."/>
            <person name="Remington K.A."/>
            <person name="Clark A.G."/>
            <person name="Waterman M.S."/>
            <person name="Eichler E.E."/>
            <person name="Adams M.D."/>
            <person name="Hunkapiller M.W."/>
            <person name="Myers E.W."/>
            <person name="Venter J.C."/>
        </authorList>
    </citation>
    <scope>NUCLEOTIDE SEQUENCE [LARGE SCALE GENOMIC DNA]</scope>
</reference>
<reference key="6">
    <citation type="journal article" date="2004" name="Genome Res.">
        <title>The status, quality, and expansion of the NIH full-length cDNA project: the Mammalian Gene Collection (MGC).</title>
        <authorList>
            <consortium name="The MGC Project Team"/>
        </authorList>
    </citation>
    <scope>NUCLEOTIDE SEQUENCE [LARGE SCALE MRNA]</scope>
    <source>
        <tissue>Kidney</tissue>
        <tissue>Skin</tissue>
    </source>
</reference>
<reference key="7">
    <citation type="journal article" date="2004" name="Nat. Genet.">
        <title>Complete sequencing and characterization of 21,243 full-length human cDNAs.</title>
        <authorList>
            <person name="Ota T."/>
            <person name="Suzuki Y."/>
            <person name="Nishikawa T."/>
            <person name="Otsuki T."/>
            <person name="Sugiyama T."/>
            <person name="Irie R."/>
            <person name="Wakamatsu A."/>
            <person name="Hayashi K."/>
            <person name="Sato H."/>
            <person name="Nagai K."/>
            <person name="Kimura K."/>
            <person name="Makita H."/>
            <person name="Sekine M."/>
            <person name="Obayashi M."/>
            <person name="Nishi T."/>
            <person name="Shibahara T."/>
            <person name="Tanaka T."/>
            <person name="Ishii S."/>
            <person name="Yamamoto J."/>
            <person name="Saito K."/>
            <person name="Kawai Y."/>
            <person name="Isono Y."/>
            <person name="Nakamura Y."/>
            <person name="Nagahari K."/>
            <person name="Murakami K."/>
            <person name="Yasuda T."/>
            <person name="Iwayanagi T."/>
            <person name="Wagatsuma M."/>
            <person name="Shiratori A."/>
            <person name="Sudo H."/>
            <person name="Hosoiri T."/>
            <person name="Kaku Y."/>
            <person name="Kodaira H."/>
            <person name="Kondo H."/>
            <person name="Sugawara M."/>
            <person name="Takahashi M."/>
            <person name="Kanda K."/>
            <person name="Yokoi T."/>
            <person name="Furuya T."/>
            <person name="Kikkawa E."/>
            <person name="Omura Y."/>
            <person name="Abe K."/>
            <person name="Kamihara K."/>
            <person name="Katsuta N."/>
            <person name="Sato K."/>
            <person name="Tanikawa M."/>
            <person name="Yamazaki M."/>
            <person name="Ninomiya K."/>
            <person name="Ishibashi T."/>
            <person name="Yamashita H."/>
            <person name="Murakawa K."/>
            <person name="Fujimori K."/>
            <person name="Tanai H."/>
            <person name="Kimata M."/>
            <person name="Watanabe M."/>
            <person name="Hiraoka S."/>
            <person name="Chiba Y."/>
            <person name="Ishida S."/>
            <person name="Ono Y."/>
            <person name="Takiguchi S."/>
            <person name="Watanabe S."/>
            <person name="Yosida M."/>
            <person name="Hotuta T."/>
            <person name="Kusano J."/>
            <person name="Kanehori K."/>
            <person name="Takahashi-Fujii A."/>
            <person name="Hara H."/>
            <person name="Tanase T.-O."/>
            <person name="Nomura Y."/>
            <person name="Togiya S."/>
            <person name="Komai F."/>
            <person name="Hara R."/>
            <person name="Takeuchi K."/>
            <person name="Arita M."/>
            <person name="Imose N."/>
            <person name="Musashino K."/>
            <person name="Yuuki H."/>
            <person name="Oshima A."/>
            <person name="Sasaki N."/>
            <person name="Aotsuka S."/>
            <person name="Yoshikawa Y."/>
            <person name="Matsunawa H."/>
            <person name="Ichihara T."/>
            <person name="Shiohata N."/>
            <person name="Sano S."/>
            <person name="Moriya S."/>
            <person name="Momiyama H."/>
            <person name="Satoh N."/>
            <person name="Takami S."/>
            <person name="Terashima Y."/>
            <person name="Suzuki O."/>
            <person name="Nakagawa S."/>
            <person name="Senoh A."/>
            <person name="Mizoguchi H."/>
            <person name="Goto Y."/>
            <person name="Shimizu F."/>
            <person name="Wakebe H."/>
            <person name="Hishigaki H."/>
            <person name="Watanabe T."/>
            <person name="Sugiyama A."/>
            <person name="Takemoto M."/>
            <person name="Kawakami B."/>
            <person name="Yamazaki M."/>
            <person name="Watanabe K."/>
            <person name="Kumagai A."/>
            <person name="Itakura S."/>
            <person name="Fukuzumi Y."/>
            <person name="Fujimori Y."/>
            <person name="Komiyama M."/>
            <person name="Tashiro H."/>
            <person name="Tanigami A."/>
            <person name="Fujiwara T."/>
            <person name="Ono T."/>
            <person name="Yamada K."/>
            <person name="Fujii Y."/>
            <person name="Ozaki K."/>
            <person name="Hirao M."/>
            <person name="Ohmori Y."/>
            <person name="Kawabata A."/>
            <person name="Hikiji T."/>
            <person name="Kobatake N."/>
            <person name="Inagaki H."/>
            <person name="Ikema Y."/>
            <person name="Okamoto S."/>
            <person name="Okitani R."/>
            <person name="Kawakami T."/>
            <person name="Noguchi S."/>
            <person name="Itoh T."/>
            <person name="Shigeta K."/>
            <person name="Senba T."/>
            <person name="Matsumura K."/>
            <person name="Nakajima Y."/>
            <person name="Mizuno T."/>
            <person name="Morinaga M."/>
            <person name="Sasaki M."/>
            <person name="Togashi T."/>
            <person name="Oyama M."/>
            <person name="Hata H."/>
            <person name="Watanabe M."/>
            <person name="Komatsu T."/>
            <person name="Mizushima-Sugano J."/>
            <person name="Satoh T."/>
            <person name="Shirai Y."/>
            <person name="Takahashi Y."/>
            <person name="Nakagawa K."/>
            <person name="Okumura K."/>
            <person name="Nagase T."/>
            <person name="Nomura N."/>
            <person name="Kikuchi H."/>
            <person name="Masuho Y."/>
            <person name="Yamashita R."/>
            <person name="Nakai K."/>
            <person name="Yada T."/>
            <person name="Nakamura Y."/>
            <person name="Ohara O."/>
            <person name="Isogai T."/>
            <person name="Sugano S."/>
        </authorList>
    </citation>
    <scope>NUCLEOTIDE SEQUENCE [LARGE SCALE MRNA] OF 59-380</scope>
    <source>
        <tissue>Embryo</tissue>
    </source>
</reference>
<reference key="8">
    <citation type="submission" date="2000-08" db="EMBL/GenBank/DDBJ databases">
        <title>Cancer metastasis-related gene.</title>
        <authorList>
            <person name="Liu Y."/>
            <person name="Zheng J."/>
            <person name="Wu B."/>
            <person name="Fang W."/>
        </authorList>
    </citation>
    <scope>NUCLEOTIDE SEQUENCE [MRNA] OF 151-380</scope>
    <source>
        <tissue>Prostatic carcinoma</tissue>
    </source>
</reference>
<reference key="9">
    <citation type="journal article" date="2003" name="J. Biol. Chem.">
        <title>Human homologues of LAG1 reconstitute Acyl-CoA-dependent ceramide synthesis in yeast.</title>
        <authorList>
            <person name="Guillas I."/>
            <person name="Jiang J.C."/>
            <person name="Vionnet C."/>
            <person name="Roubaty C."/>
            <person name="Uldry D."/>
            <person name="Chuard R."/>
            <person name="Wang J."/>
            <person name="Jazwinski S.M."/>
            <person name="Conzelmann A."/>
        </authorList>
    </citation>
    <scope>CATALYTIC ACTIVITY</scope>
</reference>
<reference key="10">
    <citation type="journal article" date="2006" name="Cell">
        <title>Global, in vivo, and site-specific phosphorylation dynamics in signaling networks.</title>
        <authorList>
            <person name="Olsen J.V."/>
            <person name="Blagoev B."/>
            <person name="Gnad F."/>
            <person name="Macek B."/>
            <person name="Kumar C."/>
            <person name="Mortensen P."/>
            <person name="Mann M."/>
        </authorList>
    </citation>
    <scope>PHOSPHORYLATION [LARGE SCALE ANALYSIS] AT SER-341; THR-346; SER-348 AND SER-349</scope>
    <scope>IDENTIFICATION BY MASS SPECTROMETRY [LARGE SCALE ANALYSIS]</scope>
    <source>
        <tissue>Cervix carcinoma</tissue>
    </source>
</reference>
<reference key="11">
    <citation type="journal article" date="2006" name="Mol. Cell. Proteomics">
        <title>Elucidation of N-glycosylation sites on human platelet proteins: a glycoproteomic approach.</title>
        <authorList>
            <person name="Lewandrowski U."/>
            <person name="Moebius J."/>
            <person name="Walter U."/>
            <person name="Sickmann A."/>
        </authorList>
    </citation>
    <scope>GLYCOSYLATION [LARGE SCALE ANALYSIS] AT ASN-19</scope>
    <source>
        <tissue>Platelet</tissue>
    </source>
</reference>
<reference key="12">
    <citation type="journal article" date="2007" name="FEBS Lett.">
        <title>Kinetic characterization of mammalian ceramide synthases: determination of K(m) values towards sphinganine.</title>
        <authorList>
            <person name="Lahiri S."/>
            <person name="Lee H."/>
            <person name="Mesicek J."/>
            <person name="Fuks Z."/>
            <person name="Haimovitz-Friedman A."/>
            <person name="Kolesnick R.N."/>
            <person name="Futerman A.H."/>
        </authorList>
    </citation>
    <scope>FUNCTION</scope>
    <scope>CATALYTIC ACTIVITY</scope>
    <scope>BIOPHYSICOCHEMICAL PROPERTIES</scope>
    <scope>PATHWAY</scope>
</reference>
<reference key="13">
    <citation type="journal article" date="2008" name="J. Biol. Chem.">
        <title>Characterization of ceramide synthase 2: tissue distribution, substrate specificity, and inhibition by sphingosine 1-phosphate.</title>
        <authorList>
            <person name="Laviad E.L."/>
            <person name="Albee L."/>
            <person name="Pankova-Kholmyansky I."/>
            <person name="Epstein S."/>
            <person name="Park H."/>
            <person name="Merrill A.H. Jr."/>
            <person name="Futerman A.H."/>
        </authorList>
    </citation>
    <scope>FUNCTION</scope>
    <scope>CATALYTIC ACTIVITY</scope>
    <scope>SUBCELLULAR LOCATION</scope>
    <scope>ACTIVITY REGULATION</scope>
    <scope>DOMAIN</scope>
    <scope>PATHWAY</scope>
    <scope>MUTAGENESIS OF ARG-230 AND ARG-325</scope>
</reference>
<reference key="14">
    <citation type="journal article" date="2008" name="J. Lipid Res.">
        <title>2-Hydroxy-ceramide synthesis by ceramide synthase family: enzymatic basis for the preference of FA chain length.</title>
        <authorList>
            <person name="Mizutani Y."/>
            <person name="Kihara A."/>
            <person name="Chiba H."/>
            <person name="Tojo H."/>
            <person name="Igarashi Y."/>
        </authorList>
    </citation>
    <scope>FUNCTION</scope>
    <scope>CATALYTIC ACTIVITY</scope>
    <scope>PATHWAY</scope>
</reference>
<reference key="15">
    <citation type="journal article" date="2008" name="J. Proteome Res.">
        <title>Phosphoproteome of resting human platelets.</title>
        <authorList>
            <person name="Zahedi R.P."/>
            <person name="Lewandrowski U."/>
            <person name="Wiesner J."/>
            <person name="Wortelkamp S."/>
            <person name="Moebius J."/>
            <person name="Schuetz C."/>
            <person name="Walter U."/>
            <person name="Gambaryan S."/>
            <person name="Sickmann A."/>
        </authorList>
    </citation>
    <scope>PHOSPHORYLATION [LARGE SCALE ANALYSIS] AT SER-341; THR-346; SER-348 AND SER-349</scope>
    <scope>IDENTIFICATION BY MASS SPECTROMETRY [LARGE SCALE ANALYSIS]</scope>
    <source>
        <tissue>Platelet</tissue>
    </source>
</reference>
<reference key="16">
    <citation type="journal article" date="2008" name="Proc. Natl. Acad. Sci. U.S.A.">
        <title>A quantitative atlas of mitotic phosphorylation.</title>
        <authorList>
            <person name="Dephoure N."/>
            <person name="Zhou C."/>
            <person name="Villen J."/>
            <person name="Beausoleil S.A."/>
            <person name="Bakalarski C.E."/>
            <person name="Elledge S.J."/>
            <person name="Gygi S.P."/>
        </authorList>
    </citation>
    <scope>IDENTIFICATION BY MASS SPECTROMETRY [LARGE SCALE ANALYSIS]</scope>
    <source>
        <tissue>Cervix carcinoma</tissue>
    </source>
</reference>
<reference key="17">
    <citation type="journal article" date="2008" name="Proteomics">
        <title>Large-scale phosphoproteome analysis of human liver tissue by enrichment and fractionation of phosphopeptides with strong anion exchange chromatography.</title>
        <authorList>
            <person name="Han G."/>
            <person name="Ye M."/>
            <person name="Zhou H."/>
            <person name="Jiang X."/>
            <person name="Feng S."/>
            <person name="Jiang X."/>
            <person name="Tian R."/>
            <person name="Wan D."/>
            <person name="Zou H."/>
            <person name="Gu J."/>
        </authorList>
    </citation>
    <scope>PHOSPHORYLATION [LARGE SCALE ANALYSIS] AT SER-341; THR-346; SER-348 AND SER-349</scope>
    <scope>IDENTIFICATION BY MASS SPECTROMETRY [LARGE SCALE ANALYSIS]</scope>
    <source>
        <tissue>Liver</tissue>
    </source>
</reference>
<reference key="18">
    <citation type="journal article" date="2009" name="Biochem. J.">
        <title>Disruption of ceramide synthesis by CerS2 down-regulation leads to autophagy and the unfolded protein response.</title>
        <authorList>
            <person name="Spassieva S.D."/>
            <person name="Mullen T.D."/>
            <person name="Townsend D.M."/>
            <person name="Obeid L.M."/>
        </authorList>
    </citation>
    <scope>FUNCTION</scope>
    <scope>CATALYTIC ACTIVITY</scope>
    <scope>PATHWAY</scope>
</reference>
<reference key="19">
    <citation type="journal article" date="2009" name="J. Proteome Res.">
        <title>Glycoproteomics analysis of human liver tissue by combination of multiple enzyme digestion and hydrazide chemistry.</title>
        <authorList>
            <person name="Chen R."/>
            <person name="Jiang X."/>
            <person name="Sun D."/>
            <person name="Han G."/>
            <person name="Wang F."/>
            <person name="Ye M."/>
            <person name="Wang L."/>
            <person name="Zou H."/>
        </authorList>
    </citation>
    <scope>GLYCOSYLATION [LARGE SCALE ANALYSIS] AT ASN-19</scope>
    <source>
        <tissue>Liver</tissue>
    </source>
</reference>
<reference key="20">
    <citation type="journal article" date="2010" name="Proc. Natl. Acad. Sci. U.S.A.">
        <title>ELOVL1 production of C24 acyl-CoAs is linked to C24 sphingolipid synthesis.</title>
        <authorList>
            <person name="Ohno Y."/>
            <person name="Suto S."/>
            <person name="Yamanaka M."/>
            <person name="Mizutani Y."/>
            <person name="Mitsutake S."/>
            <person name="Igarashi Y."/>
            <person name="Sassa T."/>
            <person name="Kihara A."/>
        </authorList>
    </citation>
    <scope>FUNCTION</scope>
    <scope>CATALYTIC ACTIVITY</scope>
    <scope>PATHWAY</scope>
    <scope>INTERACTION WITH ELOV1; HSD17B12 AND TECR</scope>
</reference>
<reference key="21">
    <citation type="journal article" date="2010" name="Sci. Signal.">
        <title>Quantitative phosphoproteomics reveals widespread full phosphorylation site occupancy during mitosis.</title>
        <authorList>
            <person name="Olsen J.V."/>
            <person name="Vermeulen M."/>
            <person name="Santamaria A."/>
            <person name="Kumar C."/>
            <person name="Miller M.L."/>
            <person name="Jensen L.J."/>
            <person name="Gnad F."/>
            <person name="Cox J."/>
            <person name="Jensen T.S."/>
            <person name="Nigg E.A."/>
            <person name="Brunak S."/>
            <person name="Mann M."/>
        </authorList>
    </citation>
    <scope>PHOSPHORYLATION [LARGE SCALE ANALYSIS] AT SER-341</scope>
    <scope>IDENTIFICATION BY MASS SPECTROMETRY [LARGE SCALE ANALYSIS]</scope>
    <source>
        <tissue>Cervix carcinoma</tissue>
    </source>
</reference>
<reference key="22">
    <citation type="journal article" date="2011" name="BMC Syst. Biol.">
        <title>Initial characterization of the human central proteome.</title>
        <authorList>
            <person name="Burkard T.R."/>
            <person name="Planyavsky M."/>
            <person name="Kaupe I."/>
            <person name="Breitwieser F.P."/>
            <person name="Buerckstuemmer T."/>
            <person name="Bennett K.L."/>
            <person name="Superti-Furga G."/>
            <person name="Colinge J."/>
        </authorList>
    </citation>
    <scope>IDENTIFICATION BY MASS SPECTROMETRY [LARGE SCALE ANALYSIS]</scope>
</reference>
<reference key="23">
    <citation type="journal article" date="2011" name="Sci. Signal.">
        <title>System-wide temporal characterization of the proteome and phosphoproteome of human embryonic stem cell differentiation.</title>
        <authorList>
            <person name="Rigbolt K.T."/>
            <person name="Prokhorova T.A."/>
            <person name="Akimov V."/>
            <person name="Henningsen J."/>
            <person name="Johansen P.T."/>
            <person name="Kratchmarova I."/>
            <person name="Kassem M."/>
            <person name="Mann M."/>
            <person name="Olsen J.V."/>
            <person name="Blagoev B."/>
        </authorList>
    </citation>
    <scope>PHOSPHORYLATION [LARGE SCALE ANALYSIS] AT SER-341; THR-346; SER-348 AND SER-349</scope>
    <scope>IDENTIFICATION BY MASS SPECTROMETRY [LARGE SCALE ANALYSIS]</scope>
</reference>
<reference key="24">
    <citation type="journal article" date="2012" name="J. Lipid Res.">
        <title>A fluorescent assay for ceramide synthase activity.</title>
        <authorList>
            <person name="Kim H.J."/>
            <person name="Qiao Q."/>
            <person name="Toop H.D."/>
            <person name="Morris J.C."/>
            <person name="Don A.S."/>
        </authorList>
    </citation>
    <scope>FUNCTION</scope>
    <scope>CATALYTIC ACTIVITY</scope>
    <scope>PATHWAY</scope>
</reference>
<reference key="25">
    <citation type="journal article" date="2012" name="J. Biol. Chem.">
        <title>Acyl chain specificity of ceramide synthases is determined within a region of 150 residues in the Tram-Lag-CLN8 (TLC) domain.</title>
        <authorList>
            <person name="Tidhar R."/>
            <person name="Ben-Dor S."/>
            <person name="Wang E."/>
            <person name="Kelly S."/>
            <person name="Merrill A.H. Jr."/>
            <person name="Futerman A.H."/>
        </authorList>
    </citation>
    <scope>FUNCTION</scope>
    <scope>CATALYTIC ACTIVITY</scope>
    <scope>PATHWAY</scope>
</reference>
<reference key="26">
    <citation type="journal article" date="2013" name="J. Proteome Res.">
        <title>Toward a comprehensive characterization of a human cancer cell phosphoproteome.</title>
        <authorList>
            <person name="Zhou H."/>
            <person name="Di Palma S."/>
            <person name="Preisinger C."/>
            <person name="Peng M."/>
            <person name="Polat A.N."/>
            <person name="Heck A.J."/>
            <person name="Mohammed S."/>
        </authorList>
    </citation>
    <scope>PHOSPHORYLATION [LARGE SCALE ANALYSIS] AT SER-349</scope>
    <scope>IDENTIFICATION BY MASS SPECTROMETRY [LARGE SCALE ANALYSIS]</scope>
    <source>
        <tissue>Erythroleukemia</tissue>
    </source>
</reference>
<reference key="27">
    <citation type="journal article" date="2015" name="Proteomics">
        <title>N-terminome analysis of the human mitochondrial proteome.</title>
        <authorList>
            <person name="Vaca Jacome A.S."/>
            <person name="Rabilloud T."/>
            <person name="Schaeffer-Reiss C."/>
            <person name="Rompais M."/>
            <person name="Ayoub D."/>
            <person name="Lane L."/>
            <person name="Bairoch A."/>
            <person name="Van Dorsselaer A."/>
            <person name="Carapito C."/>
        </authorList>
    </citation>
    <scope>IDENTIFICATION BY MASS SPECTROMETRY [LARGE SCALE ANALYSIS]</scope>
</reference>
<reference key="28">
    <citation type="journal article" date="2016" name="J. Biol. Chem.">
        <title>Enzyme activities of the ceramide synthases CERS2-6 are regulated by phosphorylation in the C-terminal region.</title>
        <authorList>
            <person name="Sassa T."/>
            <person name="Hirayama T."/>
            <person name="Kihara A."/>
        </authorList>
    </citation>
    <scope>FUNCTION</scope>
    <scope>CATALYTIC ACTIVITY</scope>
    <scope>PATHWAY</scope>
    <scope>BIOPHYSICOCHEMICAL PROPERTIES</scope>
    <scope>PHOSPHORYLATION</scope>
    <scope>GLYCOSYLATION</scope>
    <scope>TOPOLOGY</scope>
    <scope>MUTAGENESIS OF 341-SER--SER-349</scope>
</reference>
<reference key="29">
    <citation type="journal article" date="2018" name="J. Biol. Chem.">
        <title>Eleven residues determine the acyl chain specificity of ceramide synthases.</title>
        <authorList>
            <person name="Tidhar R."/>
            <person name="Zelnik I.D."/>
            <person name="Volpert G."/>
            <person name="Ben-Dor S."/>
            <person name="Kelly S."/>
            <person name="Merrill A.H. Jr."/>
            <person name="Futerman A.H."/>
        </authorList>
    </citation>
    <scope>FUNCTION</scope>
    <scope>CATALYTIC ACTIVITY</scope>
    <scope>PATHWAY</scope>
    <scope>GLYCOSYLATION</scope>
    <scope>DOMAIN</scope>
</reference>
<reference key="30">
    <citation type="journal article" date="2024" name="Nat. Metab.">
        <title>PAQR4 regulates adipocyte function and systemic metabolic health by mediating ceramide levels.</title>
        <authorList>
            <person name="Zhu Q."/>
            <person name="Chen S."/>
            <person name="Funcke J.B."/>
            <person name="Straub L.G."/>
            <person name="Lin Q."/>
            <person name="Zhao S."/>
            <person name="Joung C."/>
            <person name="Zhang Z."/>
            <person name="Kim D.S."/>
            <person name="Li N."/>
            <person name="Gliniak C.M."/>
            <person name="Lee C."/>
            <person name="Cebrian-Serrano A."/>
            <person name="Pedersen L."/>
            <person name="Halberg N."/>
            <person name="Gordillo R."/>
            <person name="Kusminski C.M."/>
            <person name="Scherer P.E."/>
        </authorList>
    </citation>
    <scope>INTERACTION WITH PAQR4</scope>
</reference>
<protein>
    <recommendedName>
        <fullName evidence="20">Ceramide synthase 2</fullName>
        <shortName evidence="20">CerS2</shortName>
    </recommendedName>
    <alternativeName>
        <fullName evidence="19">LAG1 longevity assurance homolog 2</fullName>
    </alternativeName>
    <alternativeName>
        <fullName evidence="19">SP260</fullName>
    </alternativeName>
    <alternativeName>
        <fullName evidence="22">Sphingosine N-acyltransferase CERS2</fullName>
        <ecNumber evidence="13">2.3.1.24</ecNumber>
    </alternativeName>
    <alternativeName>
        <fullName evidence="21">Tumor metastasis-suppressor gene 1 protein</fullName>
    </alternativeName>
    <alternativeName>
        <fullName evidence="22">Very-long-chain ceramide synthase CERS2</fullName>
        <ecNumber evidence="6 8 9 10 12 13 16">2.3.1.297</ecNumber>
    </alternativeName>
</protein>
<organism>
    <name type="scientific">Homo sapiens</name>
    <name type="common">Human</name>
    <dbReference type="NCBI Taxonomy" id="9606"/>
    <lineage>
        <taxon>Eukaryota</taxon>
        <taxon>Metazoa</taxon>
        <taxon>Chordata</taxon>
        <taxon>Craniata</taxon>
        <taxon>Vertebrata</taxon>
        <taxon>Euteleostomi</taxon>
        <taxon>Mammalia</taxon>
        <taxon>Eutheria</taxon>
        <taxon>Euarchontoglires</taxon>
        <taxon>Primates</taxon>
        <taxon>Haplorrhini</taxon>
        <taxon>Catarrhini</taxon>
        <taxon>Hominidae</taxon>
        <taxon>Homo</taxon>
    </lineage>
</organism>
<accession>Q96G23</accession>
<accession>D3DV06</accession>
<accession>Q5SZE5</accession>
<accession>Q9HD96</accession>
<accession>Q9NW79</accession>
<gene>
    <name evidence="20 27" type="primary">CERS2</name>
    <name evidence="19" type="synonym">LASS2</name>
    <name evidence="21" type="synonym">TMSG1</name>
</gene>